<proteinExistence type="inferred from homology"/>
<evidence type="ECO:0000255" key="1">
    <source>
        <dbReference type="HAMAP-Rule" id="MF_01398"/>
    </source>
</evidence>
<name>ATPF_XANOM</name>
<accession>Q2P7Q8</accession>
<keyword id="KW-0066">ATP synthesis</keyword>
<keyword id="KW-0997">Cell inner membrane</keyword>
<keyword id="KW-1003">Cell membrane</keyword>
<keyword id="KW-0138">CF(0)</keyword>
<keyword id="KW-0375">Hydrogen ion transport</keyword>
<keyword id="KW-0406">Ion transport</keyword>
<keyword id="KW-0472">Membrane</keyword>
<keyword id="KW-0812">Transmembrane</keyword>
<keyword id="KW-1133">Transmembrane helix</keyword>
<keyword id="KW-0813">Transport</keyword>
<reference key="1">
    <citation type="journal article" date="2005" name="Jpn. Agric. Res. Q.">
        <title>Genome sequence of Xanthomonas oryzae pv. oryzae suggests contribution of large numbers of effector genes and insertion sequences to its race diversity.</title>
        <authorList>
            <person name="Ochiai H."/>
            <person name="Inoue Y."/>
            <person name="Takeya M."/>
            <person name="Sasaki A."/>
            <person name="Kaku H."/>
        </authorList>
    </citation>
    <scope>NUCLEOTIDE SEQUENCE [LARGE SCALE GENOMIC DNA]</scope>
    <source>
        <strain>MAFF 311018</strain>
    </source>
</reference>
<comment type="function">
    <text evidence="1">F(1)F(0) ATP synthase produces ATP from ADP in the presence of a proton or sodium gradient. F-type ATPases consist of two structural domains, F(1) containing the extramembraneous catalytic core and F(0) containing the membrane proton channel, linked together by a central stalk and a peripheral stalk. During catalysis, ATP synthesis in the catalytic domain of F(1) is coupled via a rotary mechanism of the central stalk subunits to proton translocation.</text>
</comment>
<comment type="function">
    <text evidence="1">Component of the F(0) channel, it forms part of the peripheral stalk, linking F(1) to F(0).</text>
</comment>
<comment type="subunit">
    <text evidence="1">F-type ATPases have 2 components, F(1) - the catalytic core - and F(0) - the membrane proton channel. F(1) has five subunits: alpha(3), beta(3), gamma(1), delta(1), epsilon(1). F(0) has three main subunits: a(1), b(2) and c(10-14). The alpha and beta chains form an alternating ring which encloses part of the gamma chain. F(1) is attached to F(0) by a central stalk formed by the gamma and epsilon chains, while a peripheral stalk is formed by the delta and b chains.</text>
</comment>
<comment type="subcellular location">
    <subcellularLocation>
        <location evidence="1">Cell inner membrane</location>
        <topology evidence="1">Single-pass membrane protein</topology>
    </subcellularLocation>
</comment>
<comment type="similarity">
    <text evidence="1">Belongs to the ATPase B chain family.</text>
</comment>
<protein>
    <recommendedName>
        <fullName evidence="1">ATP synthase subunit b</fullName>
    </recommendedName>
    <alternativeName>
        <fullName evidence="1">ATP synthase F(0) sector subunit b</fullName>
    </alternativeName>
    <alternativeName>
        <fullName evidence="1">ATPase subunit I</fullName>
    </alternativeName>
    <alternativeName>
        <fullName evidence="1">F-type ATPase subunit b</fullName>
        <shortName evidence="1">F-ATPase subunit b</shortName>
    </alternativeName>
</protein>
<feature type="chain" id="PRO_0000368872" description="ATP synthase subunit b">
    <location>
        <begin position="1"/>
        <end position="156"/>
    </location>
</feature>
<feature type="transmembrane region" description="Helical" evidence="1">
    <location>
        <begin position="3"/>
        <end position="23"/>
    </location>
</feature>
<sequence length="156" mass="17140">MDITLTIFAQALAFAGLIWIVATKIWPPLLQAIEERQQKIAEGLAAADRSQKDLAQAQEKVNEVLKDARTKANEIIDQAHARANQIIEAAKLEAIAEANRQKELAQTEIDASATRAREELRKQVSVLAVSGAEKLLKREIDANAHKALLDELAAEI</sequence>
<dbReference type="EMBL" id="AP008229">
    <property type="protein sequence ID" value="BAE67419.1"/>
    <property type="molecule type" value="Genomic_DNA"/>
</dbReference>
<dbReference type="RefSeq" id="WP_011257621.1">
    <property type="nucleotide sequence ID" value="NC_007705.1"/>
</dbReference>
<dbReference type="SMR" id="Q2P7Q8"/>
<dbReference type="KEGG" id="xom:XOO0664"/>
<dbReference type="HOGENOM" id="CLU_079215_4_5_6"/>
<dbReference type="GO" id="GO:0005886">
    <property type="term" value="C:plasma membrane"/>
    <property type="evidence" value="ECO:0007669"/>
    <property type="project" value="UniProtKB-SubCell"/>
</dbReference>
<dbReference type="GO" id="GO:0045259">
    <property type="term" value="C:proton-transporting ATP synthase complex"/>
    <property type="evidence" value="ECO:0007669"/>
    <property type="project" value="UniProtKB-KW"/>
</dbReference>
<dbReference type="GO" id="GO:0046933">
    <property type="term" value="F:proton-transporting ATP synthase activity, rotational mechanism"/>
    <property type="evidence" value="ECO:0007669"/>
    <property type="project" value="UniProtKB-UniRule"/>
</dbReference>
<dbReference type="GO" id="GO:0046961">
    <property type="term" value="F:proton-transporting ATPase activity, rotational mechanism"/>
    <property type="evidence" value="ECO:0007669"/>
    <property type="project" value="TreeGrafter"/>
</dbReference>
<dbReference type="CDD" id="cd06503">
    <property type="entry name" value="ATP-synt_Fo_b"/>
    <property type="match status" value="1"/>
</dbReference>
<dbReference type="Gene3D" id="6.10.250.1580">
    <property type="match status" value="1"/>
</dbReference>
<dbReference type="HAMAP" id="MF_01398">
    <property type="entry name" value="ATP_synth_b_bprime"/>
    <property type="match status" value="1"/>
</dbReference>
<dbReference type="InterPro" id="IPR028987">
    <property type="entry name" value="ATP_synth_B-like_membr_sf"/>
</dbReference>
<dbReference type="InterPro" id="IPR002146">
    <property type="entry name" value="ATP_synth_b/b'su_bac/chlpt"/>
</dbReference>
<dbReference type="InterPro" id="IPR005864">
    <property type="entry name" value="ATP_synth_F0_bsu_bac"/>
</dbReference>
<dbReference type="InterPro" id="IPR050059">
    <property type="entry name" value="ATP_synthase_B_chain"/>
</dbReference>
<dbReference type="NCBIfam" id="TIGR01144">
    <property type="entry name" value="ATP_synt_b"/>
    <property type="match status" value="1"/>
</dbReference>
<dbReference type="NCBIfam" id="NF004411">
    <property type="entry name" value="PRK05759.1-2"/>
    <property type="match status" value="1"/>
</dbReference>
<dbReference type="PANTHER" id="PTHR33445:SF1">
    <property type="entry name" value="ATP SYNTHASE SUBUNIT B"/>
    <property type="match status" value="1"/>
</dbReference>
<dbReference type="PANTHER" id="PTHR33445">
    <property type="entry name" value="ATP SYNTHASE SUBUNIT B', CHLOROPLASTIC"/>
    <property type="match status" value="1"/>
</dbReference>
<dbReference type="Pfam" id="PF00430">
    <property type="entry name" value="ATP-synt_B"/>
    <property type="match status" value="1"/>
</dbReference>
<dbReference type="SUPFAM" id="SSF81573">
    <property type="entry name" value="F1F0 ATP synthase subunit B, membrane domain"/>
    <property type="match status" value="1"/>
</dbReference>
<organism>
    <name type="scientific">Xanthomonas oryzae pv. oryzae (strain MAFF 311018)</name>
    <dbReference type="NCBI Taxonomy" id="342109"/>
    <lineage>
        <taxon>Bacteria</taxon>
        <taxon>Pseudomonadati</taxon>
        <taxon>Pseudomonadota</taxon>
        <taxon>Gammaproteobacteria</taxon>
        <taxon>Lysobacterales</taxon>
        <taxon>Lysobacteraceae</taxon>
        <taxon>Xanthomonas</taxon>
    </lineage>
</organism>
<gene>
    <name evidence="1" type="primary">atpF</name>
    <name type="ordered locus">XOO0664</name>
</gene>